<accession>Q10007</accession>
<dbReference type="EMBL" id="Z47356">
    <property type="protein sequence ID" value="CAA87416.1"/>
    <property type="molecule type" value="Genomic_DNA"/>
</dbReference>
<dbReference type="PIR" id="T24940">
    <property type="entry name" value="T24940"/>
</dbReference>
<dbReference type="RefSeq" id="NP_496070.1">
    <property type="nucleotide sequence ID" value="NM_063669.2"/>
</dbReference>
<dbReference type="SMR" id="Q10007"/>
<dbReference type="BioGRID" id="53201">
    <property type="interactions" value="1"/>
</dbReference>
<dbReference type="FunCoup" id="Q10007">
    <property type="interactions" value="9"/>
</dbReference>
<dbReference type="IntAct" id="Q10007">
    <property type="interactions" value="1"/>
</dbReference>
<dbReference type="STRING" id="6239.T15H9.3.1"/>
<dbReference type="PaxDb" id="6239-T15H9.3"/>
<dbReference type="EnsemblMetazoa" id="T15H9.3.1">
    <property type="protein sequence ID" value="T15H9.3.1"/>
    <property type="gene ID" value="WBGene00001952"/>
</dbReference>
<dbReference type="GeneID" id="188539"/>
<dbReference type="KEGG" id="cel:CELE_T15H9.3"/>
<dbReference type="UCSC" id="T15H9.3">
    <property type="organism name" value="c. elegans"/>
</dbReference>
<dbReference type="AGR" id="WB:WBGene00001952"/>
<dbReference type="CTD" id="188539"/>
<dbReference type="WormBase" id="T15H9.3">
    <property type="protein sequence ID" value="CE01666"/>
    <property type="gene ID" value="WBGene00001952"/>
    <property type="gene designation" value="hlh-6"/>
</dbReference>
<dbReference type="eggNOG" id="KOG4029">
    <property type="taxonomic scope" value="Eukaryota"/>
</dbReference>
<dbReference type="HOGENOM" id="CLU_109959_0_0_1"/>
<dbReference type="InParanoid" id="Q10007"/>
<dbReference type="OMA" id="FLTMFPV"/>
<dbReference type="OrthoDB" id="5976910at2759"/>
<dbReference type="PRO" id="PR:Q10007"/>
<dbReference type="Proteomes" id="UP000001940">
    <property type="component" value="Chromosome II"/>
</dbReference>
<dbReference type="Bgee" id="WBGene00001952">
    <property type="expression patterns" value="Expressed in pharyngeal muscle cell (C elegans) and 3 other cell types or tissues"/>
</dbReference>
<dbReference type="GO" id="GO:0042995">
    <property type="term" value="C:cell projection"/>
    <property type="evidence" value="ECO:0000314"/>
    <property type="project" value="UniProtKB"/>
</dbReference>
<dbReference type="GO" id="GO:0005634">
    <property type="term" value="C:nucleus"/>
    <property type="evidence" value="ECO:0000314"/>
    <property type="project" value="UniProtKB"/>
</dbReference>
<dbReference type="GO" id="GO:0003677">
    <property type="term" value="F:DNA binding"/>
    <property type="evidence" value="ECO:0007669"/>
    <property type="project" value="UniProtKB-KW"/>
</dbReference>
<dbReference type="GO" id="GO:0000981">
    <property type="term" value="F:DNA-binding transcription factor activity, RNA polymerase II-specific"/>
    <property type="evidence" value="ECO:0000314"/>
    <property type="project" value="WormBase"/>
</dbReference>
<dbReference type="GO" id="GO:0046983">
    <property type="term" value="F:protein dimerization activity"/>
    <property type="evidence" value="ECO:0007669"/>
    <property type="project" value="InterPro"/>
</dbReference>
<dbReference type="GO" id="GO:1905905">
    <property type="term" value="P:nematode pharyngeal gland morphogenesis"/>
    <property type="evidence" value="ECO:0000315"/>
    <property type="project" value="UniProtKB"/>
</dbReference>
<dbReference type="GO" id="GO:0160094">
    <property type="term" value="P:nematode pharynx development"/>
    <property type="evidence" value="ECO:0000315"/>
    <property type="project" value="WormBase"/>
</dbReference>
<dbReference type="GO" id="GO:0051091">
    <property type="term" value="P:positive regulation of DNA-binding transcription factor activity"/>
    <property type="evidence" value="ECO:0000315"/>
    <property type="project" value="UniProtKB"/>
</dbReference>
<dbReference type="GO" id="GO:1904000">
    <property type="term" value="P:positive regulation of eating behavior"/>
    <property type="evidence" value="ECO:0000315"/>
    <property type="project" value="UniProtKB"/>
</dbReference>
<dbReference type="GO" id="GO:0110043">
    <property type="term" value="P:positive regulation of nematode pharynx morphogenesis"/>
    <property type="evidence" value="ECO:0000315"/>
    <property type="project" value="UniProtKB"/>
</dbReference>
<dbReference type="GO" id="GO:0045944">
    <property type="term" value="P:positive regulation of transcription by RNA polymerase II"/>
    <property type="evidence" value="ECO:0000315"/>
    <property type="project" value="WormBase"/>
</dbReference>
<dbReference type="CDD" id="cd19724">
    <property type="entry name" value="bHLH_TS_ASCL3_like"/>
    <property type="match status" value="1"/>
</dbReference>
<dbReference type="Gene3D" id="4.10.280.10">
    <property type="entry name" value="Helix-loop-helix DNA-binding domain"/>
    <property type="match status" value="1"/>
</dbReference>
<dbReference type="InterPro" id="IPR011598">
    <property type="entry name" value="bHLH_dom"/>
</dbReference>
<dbReference type="InterPro" id="IPR050283">
    <property type="entry name" value="E-box_TF_Regulators"/>
</dbReference>
<dbReference type="InterPro" id="IPR036638">
    <property type="entry name" value="HLH_DNA-bd_sf"/>
</dbReference>
<dbReference type="PANTHER" id="PTHR23349">
    <property type="entry name" value="BASIC HELIX-LOOP-HELIX TRANSCRIPTION FACTOR, TWIST"/>
    <property type="match status" value="1"/>
</dbReference>
<dbReference type="PANTHER" id="PTHR23349:SF108">
    <property type="entry name" value="BHLH DOMAIN-CONTAINING PROTEIN"/>
    <property type="match status" value="1"/>
</dbReference>
<dbReference type="Pfam" id="PF00010">
    <property type="entry name" value="HLH"/>
    <property type="match status" value="1"/>
</dbReference>
<dbReference type="SMART" id="SM00353">
    <property type="entry name" value="HLH"/>
    <property type="match status" value="1"/>
</dbReference>
<dbReference type="SUPFAM" id="SSF47459">
    <property type="entry name" value="HLH, helix-loop-helix DNA-binding domain"/>
    <property type="match status" value="1"/>
</dbReference>
<dbReference type="PROSITE" id="PS50888">
    <property type="entry name" value="BHLH"/>
    <property type="match status" value="1"/>
</dbReference>
<feature type="chain" id="PRO_0000127227" description="Helix-loop-helix protein 6">
    <location>
        <begin position="1"/>
        <end position="268"/>
    </location>
</feature>
<feature type="domain" description="bHLH" evidence="1">
    <location>
        <begin position="173"/>
        <end position="225"/>
    </location>
</feature>
<feature type="region of interest" description="Disordered" evidence="2">
    <location>
        <begin position="117"/>
        <end position="140"/>
    </location>
</feature>
<feature type="compositionally biased region" description="Low complexity" evidence="2">
    <location>
        <begin position="117"/>
        <end position="130"/>
    </location>
</feature>
<feature type="compositionally biased region" description="Polar residues" evidence="2">
    <location>
        <begin position="131"/>
        <end position="140"/>
    </location>
</feature>
<reference key="1">
    <citation type="journal article" date="1998" name="Science">
        <title>Genome sequence of the nematode C. elegans: a platform for investigating biology.</title>
        <authorList>
            <consortium name="The C. elegans sequencing consortium"/>
        </authorList>
    </citation>
    <scope>NUCLEOTIDE SEQUENCE [LARGE SCALE GENOMIC DNA]</scope>
    <source>
        <strain>Bristol N2</strain>
    </source>
</reference>
<reference key="2">
    <citation type="journal article" date="2007" name="Dev. Biol.">
        <title>Gland-specific expression of C. elegans hlh-6 requires the combinatorial action of three distinct promoter elements.</title>
        <authorList>
            <person name="Raharjo I."/>
            <person name="Gaudet J."/>
        </authorList>
    </citation>
    <scope>FUNCTION</scope>
    <scope>TISSUE SPECIFICITY</scope>
</reference>
<reference key="3">
    <citation type="journal article" date="2008" name="PLoS Genet.">
        <title>The HLH-6 transcription factor regulates C. elegans pharyngeal gland development and function.</title>
        <authorList>
            <person name="Smit R.B."/>
            <person name="Schnabel R."/>
            <person name="Gaudet J."/>
        </authorList>
    </citation>
    <scope>FUNCTION</scope>
    <scope>TISSUE SPECIFICITY</scope>
</reference>
<proteinExistence type="evidence at transcript level"/>
<sequence length="268" mass="30825">MSISQNNFLTMFPVTYTFENGVYSTIINQNTIQTPIPNPIQHHIQNHIQTSIPNTNLLLENVQTDVQKLMVPLIDQQFHIPTSTPLQLAPIPTQIQSQLQPQISQIPIHNQPQIQIQSQVQPQLPTQSQPKPSSKASLDTSSNAFKKYVNPFAPEATVPLPVELEDQYGPYSSSVWKRNERERCRVRNVNDGYERLRKHLPVHFDEKRISKVDTLRLAIRYIKHLDNLLRSELHQYNCKCFNGFQEESEGNILIDISTFNFNSSNNAM</sequence>
<organism>
    <name type="scientific">Caenorhabditis elegans</name>
    <dbReference type="NCBI Taxonomy" id="6239"/>
    <lineage>
        <taxon>Eukaryota</taxon>
        <taxon>Metazoa</taxon>
        <taxon>Ecdysozoa</taxon>
        <taxon>Nematoda</taxon>
        <taxon>Chromadorea</taxon>
        <taxon>Rhabditida</taxon>
        <taxon>Rhabditina</taxon>
        <taxon>Rhabditomorpha</taxon>
        <taxon>Rhabditoidea</taxon>
        <taxon>Rhabditidae</taxon>
        <taxon>Peloderinae</taxon>
        <taxon>Caenorhabditis</taxon>
    </lineage>
</organism>
<comment type="function">
    <text evidence="3 4">Transcription factor that regulates the development of the g2 pharyngeal gland cells and pharyngeal gland function and thereby is required for feeding (PubMed:18927627). Required for the expression of a number of genes in the pharyngeal gland, possibly by binding to the E box motif (5'-CANNTG-3') in the promoter region of these genes (PubMed:18927627). Positively regulates the expression of genes encoding mucin-like proteins, which lubricate the pharyngeal tract to ensure efficient passage of the bacterial food source (PubMed:18927627). Exhibits pharyngeal gland-specific positive autoregulation activity (PubMed:17049341).</text>
</comment>
<comment type="subcellular location">
    <subcellularLocation>
        <location evidence="1">Nucleus</location>
    </subcellularLocation>
</comment>
<comment type="tissue specificity">
    <text evidence="3 4">Expressed in the gland cells of the pharynx and weakly in the pharyngeal neuron.</text>
</comment>
<name>HLH6_CAEEL</name>
<protein>
    <recommendedName>
        <fullName>Helix-loop-helix protein 6</fullName>
    </recommendedName>
</protein>
<gene>
    <name type="primary">hlh-6</name>
    <name type="ORF">T15H9.3</name>
</gene>
<evidence type="ECO:0000255" key="1">
    <source>
        <dbReference type="PROSITE-ProRule" id="PRU00981"/>
    </source>
</evidence>
<evidence type="ECO:0000256" key="2">
    <source>
        <dbReference type="SAM" id="MobiDB-lite"/>
    </source>
</evidence>
<evidence type="ECO:0000269" key="3">
    <source>
    </source>
</evidence>
<evidence type="ECO:0000269" key="4">
    <source>
    </source>
</evidence>
<keyword id="KW-0010">Activator</keyword>
<keyword id="KW-0238">DNA-binding</keyword>
<keyword id="KW-0539">Nucleus</keyword>
<keyword id="KW-1185">Reference proteome</keyword>
<keyword id="KW-0804">Transcription</keyword>
<keyword id="KW-0805">Transcription regulation</keyword>